<evidence type="ECO:0000255" key="1">
    <source>
        <dbReference type="HAMAP-Rule" id="MF_01309"/>
    </source>
</evidence>
<evidence type="ECO:0000305" key="2"/>
<accession>B5Z8W1</accession>
<gene>
    <name evidence="1" type="primary">rpsC</name>
    <name type="ordered locus">HPG27_1262</name>
</gene>
<name>RS3_HELPG</name>
<reference key="1">
    <citation type="journal article" date="2009" name="J. Bacteriol.">
        <title>The complete genome sequence of Helicobacter pylori strain G27.</title>
        <authorList>
            <person name="Baltrus D.A."/>
            <person name="Amieva M.R."/>
            <person name="Covacci A."/>
            <person name="Lowe T.M."/>
            <person name="Merrell D.S."/>
            <person name="Ottemann K.M."/>
            <person name="Stein M."/>
            <person name="Salama N.R."/>
            <person name="Guillemin K."/>
        </authorList>
    </citation>
    <scope>NUCLEOTIDE SEQUENCE [LARGE SCALE GENOMIC DNA]</scope>
    <source>
        <strain>G27</strain>
    </source>
</reference>
<feature type="chain" id="PRO_1000140977" description="Small ribosomal subunit protein uS3">
    <location>
        <begin position="1"/>
        <end position="234"/>
    </location>
</feature>
<feature type="domain" description="KH type-2" evidence="1">
    <location>
        <begin position="39"/>
        <end position="107"/>
    </location>
</feature>
<organism>
    <name type="scientific">Helicobacter pylori (strain G27)</name>
    <dbReference type="NCBI Taxonomy" id="563041"/>
    <lineage>
        <taxon>Bacteria</taxon>
        <taxon>Pseudomonadati</taxon>
        <taxon>Campylobacterota</taxon>
        <taxon>Epsilonproteobacteria</taxon>
        <taxon>Campylobacterales</taxon>
        <taxon>Helicobacteraceae</taxon>
        <taxon>Helicobacter</taxon>
    </lineage>
</organism>
<proteinExistence type="inferred from homology"/>
<dbReference type="EMBL" id="CP001173">
    <property type="protein sequence ID" value="ACI28010.1"/>
    <property type="molecule type" value="Genomic_DNA"/>
</dbReference>
<dbReference type="RefSeq" id="WP_000529972.1">
    <property type="nucleotide sequence ID" value="NC_011333.1"/>
</dbReference>
<dbReference type="SMR" id="B5Z8W1"/>
<dbReference type="KEGG" id="hpg:HPG27_1262"/>
<dbReference type="HOGENOM" id="CLU_058591_0_2_7"/>
<dbReference type="Proteomes" id="UP000001735">
    <property type="component" value="Chromosome"/>
</dbReference>
<dbReference type="GO" id="GO:0022627">
    <property type="term" value="C:cytosolic small ribosomal subunit"/>
    <property type="evidence" value="ECO:0007669"/>
    <property type="project" value="TreeGrafter"/>
</dbReference>
<dbReference type="GO" id="GO:0003729">
    <property type="term" value="F:mRNA binding"/>
    <property type="evidence" value="ECO:0007669"/>
    <property type="project" value="UniProtKB-UniRule"/>
</dbReference>
<dbReference type="GO" id="GO:0019843">
    <property type="term" value="F:rRNA binding"/>
    <property type="evidence" value="ECO:0007669"/>
    <property type="project" value="UniProtKB-UniRule"/>
</dbReference>
<dbReference type="GO" id="GO:0003735">
    <property type="term" value="F:structural constituent of ribosome"/>
    <property type="evidence" value="ECO:0007669"/>
    <property type="project" value="InterPro"/>
</dbReference>
<dbReference type="GO" id="GO:0006412">
    <property type="term" value="P:translation"/>
    <property type="evidence" value="ECO:0007669"/>
    <property type="project" value="UniProtKB-UniRule"/>
</dbReference>
<dbReference type="CDD" id="cd02412">
    <property type="entry name" value="KH-II_30S_S3"/>
    <property type="match status" value="1"/>
</dbReference>
<dbReference type="FunFam" id="3.30.1140.32:FF:000006">
    <property type="entry name" value="30S ribosomal protein S3"/>
    <property type="match status" value="1"/>
</dbReference>
<dbReference type="FunFam" id="3.30.300.20:FF:000001">
    <property type="entry name" value="30S ribosomal protein S3"/>
    <property type="match status" value="1"/>
</dbReference>
<dbReference type="Gene3D" id="3.30.300.20">
    <property type="match status" value="1"/>
</dbReference>
<dbReference type="Gene3D" id="3.30.1140.32">
    <property type="entry name" value="Ribosomal protein S3, C-terminal domain"/>
    <property type="match status" value="1"/>
</dbReference>
<dbReference type="HAMAP" id="MF_01309_B">
    <property type="entry name" value="Ribosomal_uS3_B"/>
    <property type="match status" value="1"/>
</dbReference>
<dbReference type="InterPro" id="IPR004087">
    <property type="entry name" value="KH_dom"/>
</dbReference>
<dbReference type="InterPro" id="IPR015946">
    <property type="entry name" value="KH_dom-like_a/b"/>
</dbReference>
<dbReference type="InterPro" id="IPR004044">
    <property type="entry name" value="KH_dom_type_2"/>
</dbReference>
<dbReference type="InterPro" id="IPR009019">
    <property type="entry name" value="KH_sf_prok-type"/>
</dbReference>
<dbReference type="InterPro" id="IPR036419">
    <property type="entry name" value="Ribosomal_S3_C_sf"/>
</dbReference>
<dbReference type="InterPro" id="IPR005704">
    <property type="entry name" value="Ribosomal_uS3_bac-typ"/>
</dbReference>
<dbReference type="InterPro" id="IPR001351">
    <property type="entry name" value="Ribosomal_uS3_C"/>
</dbReference>
<dbReference type="InterPro" id="IPR018280">
    <property type="entry name" value="Ribosomal_uS3_CS"/>
</dbReference>
<dbReference type="NCBIfam" id="TIGR01009">
    <property type="entry name" value="rpsC_bact"/>
    <property type="match status" value="1"/>
</dbReference>
<dbReference type="PANTHER" id="PTHR11760">
    <property type="entry name" value="30S/40S RIBOSOMAL PROTEIN S3"/>
    <property type="match status" value="1"/>
</dbReference>
<dbReference type="PANTHER" id="PTHR11760:SF19">
    <property type="entry name" value="SMALL RIBOSOMAL SUBUNIT PROTEIN US3C"/>
    <property type="match status" value="1"/>
</dbReference>
<dbReference type="Pfam" id="PF07650">
    <property type="entry name" value="KH_2"/>
    <property type="match status" value="1"/>
</dbReference>
<dbReference type="Pfam" id="PF00189">
    <property type="entry name" value="Ribosomal_S3_C"/>
    <property type="match status" value="1"/>
</dbReference>
<dbReference type="SMART" id="SM00322">
    <property type="entry name" value="KH"/>
    <property type="match status" value="1"/>
</dbReference>
<dbReference type="SUPFAM" id="SSF54814">
    <property type="entry name" value="Prokaryotic type KH domain (KH-domain type II)"/>
    <property type="match status" value="1"/>
</dbReference>
<dbReference type="SUPFAM" id="SSF54821">
    <property type="entry name" value="Ribosomal protein S3 C-terminal domain"/>
    <property type="match status" value="1"/>
</dbReference>
<dbReference type="PROSITE" id="PS50823">
    <property type="entry name" value="KH_TYPE_2"/>
    <property type="match status" value="1"/>
</dbReference>
<dbReference type="PROSITE" id="PS00548">
    <property type="entry name" value="RIBOSOMAL_S3"/>
    <property type="match status" value="1"/>
</dbReference>
<sequence>MGQKVNPVGLRLGINRNWTSRWFPSARTAPSNIDEDNKIRKFLKKELYYAGVSEIVIERAAKKLRVTVVAARPGLIIGKKGVDIEKVKEGLKTLIKKEVSINIKEVKRPQADAQLAAENVATQLEKRVAFRRAMKKVMQAALKSGAKGIKVRVSGRLAGAEIARTEWYMEGRVPLHTLRAKIDYGFAEAMTVYGIIGVKVWIFKGEVLQKGIQFEKKEEAKEEREPRRSRRGRQ</sequence>
<keyword id="KW-1185">Reference proteome</keyword>
<keyword id="KW-0687">Ribonucleoprotein</keyword>
<keyword id="KW-0689">Ribosomal protein</keyword>
<keyword id="KW-0694">RNA-binding</keyword>
<keyword id="KW-0699">rRNA-binding</keyword>
<comment type="function">
    <text evidence="1">Binds the lower part of the 30S subunit head. Binds mRNA in the 70S ribosome, positioning it for translation.</text>
</comment>
<comment type="subunit">
    <text evidence="1">Part of the 30S ribosomal subunit. Forms a tight complex with proteins S10 and S14.</text>
</comment>
<comment type="similarity">
    <text evidence="1">Belongs to the universal ribosomal protein uS3 family.</text>
</comment>
<protein>
    <recommendedName>
        <fullName evidence="1">Small ribosomal subunit protein uS3</fullName>
    </recommendedName>
    <alternativeName>
        <fullName evidence="2">30S ribosomal protein S3</fullName>
    </alternativeName>
</protein>